<reference key="1">
    <citation type="journal article" date="2004" name="J. Bacteriol.">
        <title>Complete genome sequence of the genetically tractable hydrogenotrophic methanogen Methanococcus maripaludis.</title>
        <authorList>
            <person name="Hendrickson E.L."/>
            <person name="Kaul R."/>
            <person name="Zhou Y."/>
            <person name="Bovee D."/>
            <person name="Chapman P."/>
            <person name="Chung J."/>
            <person name="Conway de Macario E."/>
            <person name="Dodsworth J.A."/>
            <person name="Gillett W."/>
            <person name="Graham D.E."/>
            <person name="Hackett M."/>
            <person name="Haydock A.K."/>
            <person name="Kang A."/>
            <person name="Land M.L."/>
            <person name="Levy R."/>
            <person name="Lie T.J."/>
            <person name="Major T.A."/>
            <person name="Moore B.C."/>
            <person name="Porat I."/>
            <person name="Palmeiri A."/>
            <person name="Rouse G."/>
            <person name="Saenphimmachak C."/>
            <person name="Soell D."/>
            <person name="Van Dien S."/>
            <person name="Wang T."/>
            <person name="Whitman W.B."/>
            <person name="Xia Q."/>
            <person name="Zhang Y."/>
            <person name="Larimer F.W."/>
            <person name="Olson M.V."/>
            <person name="Leigh J.A."/>
        </authorList>
    </citation>
    <scope>NUCLEOTIDE SEQUENCE [LARGE SCALE GENOMIC DNA]</scope>
    <source>
        <strain>DSM 14266 / JCM 13030 / NBRC 101832 / S2 / LL</strain>
    </source>
</reference>
<reference key="2">
    <citation type="journal article" date="2010" name="Proc. Natl. Acad. Sci. U.S.A.">
        <title>Protein complexing in a methanogen suggests electron bifurcation and electron delivery from formate to heterodisulfide reductase.</title>
        <authorList>
            <person name="Costa K.C."/>
            <person name="Wong P.M."/>
            <person name="Wang T."/>
            <person name="Lie T.J."/>
            <person name="Dodsworth J.A."/>
            <person name="Swanson I."/>
            <person name="Burn J.A."/>
            <person name="Hackett M."/>
            <person name="Leigh J.A."/>
        </authorList>
    </citation>
    <scope>FUNCTION</scope>
    <scope>CATALYTIC ACTIVITY</scope>
    <scope>SUBUNIT</scope>
    <source>
        <strain>DSM 14266 / JCM 13030 / NBRC 101832 / S2 / LL</strain>
    </source>
</reference>
<reference key="3">
    <citation type="journal article" date="2013" name="J. Bacteriol.">
        <title>VhuD facilitates electron flow from H2 or formate to heterodisulfide reductase in Methanococcus maripaludis.</title>
        <authorList>
            <person name="Costa K.C."/>
            <person name="Lie T.J."/>
            <person name="Xia Q."/>
            <person name="Leigh J.A."/>
        </authorList>
    </citation>
    <scope>FUNCTION</scope>
    <scope>CATALYTIC ACTIVITY</scope>
    <scope>SUBUNIT</scope>
    <source>
        <strain>DSM 14266 / JCM 13030 / NBRC 101832 / S2 / LL</strain>
    </source>
</reference>
<feature type="chain" id="PRO_0000443940" description="H(2)/formate:CoB-CoM heterodisulfide,ferredoxin reductase subunit C2">
    <location>
        <begin position="1"/>
        <end position="184"/>
    </location>
</feature>
<feature type="domain" description="4Fe-4S ferredoxin-type 1" evidence="1">
    <location>
        <begin position="24"/>
        <end position="54"/>
    </location>
</feature>
<feature type="domain" description="4Fe-4S ferredoxin-type 2" evidence="1">
    <location>
        <begin position="65"/>
        <end position="97"/>
    </location>
</feature>
<feature type="binding site" evidence="1">
    <location>
        <position position="34"/>
    </location>
    <ligand>
        <name>[4Fe-4S] cluster</name>
        <dbReference type="ChEBI" id="CHEBI:49883"/>
        <label>1</label>
    </ligand>
</feature>
<feature type="binding site" evidence="1">
    <location>
        <position position="37"/>
    </location>
    <ligand>
        <name>[4Fe-4S] cluster</name>
        <dbReference type="ChEBI" id="CHEBI:49883"/>
        <label>1</label>
    </ligand>
</feature>
<feature type="binding site" evidence="1">
    <location>
        <position position="40"/>
    </location>
    <ligand>
        <name>[4Fe-4S] cluster</name>
        <dbReference type="ChEBI" id="CHEBI:49883"/>
        <label>1</label>
    </ligand>
</feature>
<feature type="binding site" evidence="1">
    <location>
        <position position="44"/>
    </location>
    <ligand>
        <name>[4Fe-4S] cluster</name>
        <dbReference type="ChEBI" id="CHEBI:49883"/>
        <label>2</label>
    </ligand>
</feature>
<feature type="binding site" evidence="1">
    <location>
        <position position="77"/>
    </location>
    <ligand>
        <name>[4Fe-4S] cluster</name>
        <dbReference type="ChEBI" id="CHEBI:49883"/>
        <label>2</label>
    </ligand>
</feature>
<feature type="binding site" evidence="1">
    <location>
        <position position="80"/>
    </location>
    <ligand>
        <name>[4Fe-4S] cluster</name>
        <dbReference type="ChEBI" id="CHEBI:49883"/>
        <label>2</label>
    </ligand>
</feature>
<feature type="binding site" evidence="1">
    <location>
        <position position="83"/>
    </location>
    <ligand>
        <name>[4Fe-4S] cluster</name>
        <dbReference type="ChEBI" id="CHEBI:49883"/>
        <label>2</label>
    </ligand>
</feature>
<feature type="binding site" evidence="1">
    <location>
        <position position="87"/>
    </location>
    <ligand>
        <name>[4Fe-4S] cluster</name>
        <dbReference type="ChEBI" id="CHEBI:49883"/>
        <label>1</label>
    </ligand>
</feature>
<keyword id="KW-0004">4Fe-4S</keyword>
<keyword id="KW-0408">Iron</keyword>
<keyword id="KW-0411">Iron-sulfur</keyword>
<keyword id="KW-0479">Metal-binding</keyword>
<keyword id="KW-0484">Methanogenesis</keyword>
<keyword id="KW-0560">Oxidoreductase</keyword>
<keyword id="KW-1185">Reference proteome</keyword>
<gene>
    <name evidence="4" type="primary">hdrC2</name>
    <name evidence="6" type="ordered locus">MMP1054</name>
</gene>
<sequence>MMKAEELNKGFVNEIIEAGTPVPGEKEVASLKSCYQCGTCTGSCPSGRRTAYRTRKVIRQALLGIDSVLDSDDIWKCTTCYTCYERCPRDVKVTEIIKTIRNLAAQKGNMAKPHKMTAVYVLKAGHAVPANDDTAKLRKSIGLAEKAPIAQFSQKDMDELRTLAKNLKFDELIGFDWKTMGLKQ</sequence>
<comment type="function">
    <text evidence="2 3">Part of a complex that catalyzes the reversible reduction of CoM-S-S-CoB to the thiol-coenzymes H-S-CoM (coenzyme M) and H-S-CoB (coenzyme B).</text>
</comment>
<comment type="catalytic activity">
    <reaction evidence="3">
        <text>coenzyme B + coenzyme M + 2 reduced [2Fe-2S]-[ferredoxin] + 2 H(+) = coenzyme M-coenzyme B heterodisulfide + 2 H2 + 2 oxidized [2Fe-2S]-[ferredoxin]</text>
        <dbReference type="Rhea" id="RHEA:55748"/>
        <dbReference type="Rhea" id="RHEA-COMP:10000"/>
        <dbReference type="Rhea" id="RHEA-COMP:10001"/>
        <dbReference type="ChEBI" id="CHEBI:15378"/>
        <dbReference type="ChEBI" id="CHEBI:18276"/>
        <dbReference type="ChEBI" id="CHEBI:33737"/>
        <dbReference type="ChEBI" id="CHEBI:33738"/>
        <dbReference type="ChEBI" id="CHEBI:58319"/>
        <dbReference type="ChEBI" id="CHEBI:58411"/>
        <dbReference type="ChEBI" id="CHEBI:58596"/>
        <dbReference type="EC" id="1.8.98.5"/>
    </reaction>
</comment>
<comment type="catalytic activity">
    <reaction evidence="2 3">
        <text>coenzyme B + coenzyme M + 2 reduced [2Fe-2S]-[ferredoxin] + 2 CO2 = coenzyme M-coenzyme B heterodisulfide + 2 formate + 2 oxidized [2Fe-2S]-[ferredoxin]</text>
        <dbReference type="Rhea" id="RHEA:55752"/>
        <dbReference type="Rhea" id="RHEA-COMP:10000"/>
        <dbReference type="Rhea" id="RHEA-COMP:10001"/>
        <dbReference type="ChEBI" id="CHEBI:15740"/>
        <dbReference type="ChEBI" id="CHEBI:16526"/>
        <dbReference type="ChEBI" id="CHEBI:33737"/>
        <dbReference type="ChEBI" id="CHEBI:33738"/>
        <dbReference type="ChEBI" id="CHEBI:58319"/>
        <dbReference type="ChEBI" id="CHEBI:58411"/>
        <dbReference type="ChEBI" id="CHEBI:58596"/>
        <dbReference type="EC" id="1.8.98.6"/>
    </reaction>
</comment>
<comment type="cofactor">
    <cofactor evidence="1">
        <name>[4Fe-4S] cluster</name>
        <dbReference type="ChEBI" id="CHEBI:49883"/>
    </cofactor>
    <text evidence="1">Binds 2 [4Fe-4S] cluster.</text>
</comment>
<comment type="pathway">
    <text evidence="5">Cofactor metabolism; coenzyme M-coenzyme B heterodisulfide reduction; coenzyme B and coenzyme M from coenzyme M-coenzyme B heterodisulfide: step 1/1.</text>
</comment>
<comment type="subunit">
    <text evidence="2 3">The heterodisulfide reductase is composed of three subunits; HdrA, HdrB and HdrC. B1 and B2 subunits are interchangeable, as are the C1 and C2 subunits. The heterodisulfide reductase forms a supercomplex with formylmethanofuran dehydrogenase (Fwd), F(420)-non-reducing hydrogenase (Vhu) and formate dehydrogenase (Fdh).</text>
</comment>
<comment type="similarity">
    <text evidence="5">Belongs to the HdrC family.</text>
</comment>
<name>HDRC2_METMP</name>
<dbReference type="EC" id="1.8.98.5" evidence="3"/>
<dbReference type="EC" id="1.8.98.6" evidence="2 3"/>
<dbReference type="EMBL" id="BX950229">
    <property type="protein sequence ID" value="CAF30610.1"/>
    <property type="molecule type" value="Genomic_DNA"/>
</dbReference>
<dbReference type="RefSeq" id="WP_011170998.1">
    <property type="nucleotide sequence ID" value="NC_005791.1"/>
</dbReference>
<dbReference type="SMR" id="Q6LYD7"/>
<dbReference type="STRING" id="267377.MMP1054"/>
<dbReference type="EnsemblBacteria" id="CAF30610">
    <property type="protein sequence ID" value="CAF30610"/>
    <property type="gene ID" value="MMP1054"/>
</dbReference>
<dbReference type="GeneID" id="2762781"/>
<dbReference type="KEGG" id="mmp:MMP1054"/>
<dbReference type="PATRIC" id="fig|267377.15.peg.1087"/>
<dbReference type="eggNOG" id="arCOG00964">
    <property type="taxonomic scope" value="Archaea"/>
</dbReference>
<dbReference type="HOGENOM" id="CLU_121273_0_0_2"/>
<dbReference type="OrthoDB" id="144910at2157"/>
<dbReference type="UniPathway" id="UPA00647">
    <property type="reaction ID" value="UER00700"/>
</dbReference>
<dbReference type="Proteomes" id="UP000000590">
    <property type="component" value="Chromosome"/>
</dbReference>
<dbReference type="GO" id="GO:0005886">
    <property type="term" value="C:plasma membrane"/>
    <property type="evidence" value="ECO:0007669"/>
    <property type="project" value="TreeGrafter"/>
</dbReference>
<dbReference type="GO" id="GO:0051539">
    <property type="term" value="F:4 iron, 4 sulfur cluster binding"/>
    <property type="evidence" value="ECO:0007669"/>
    <property type="project" value="UniProtKB-KW"/>
</dbReference>
<dbReference type="GO" id="GO:0051912">
    <property type="term" value="F:CoB--CoM heterodisulfide reductase activity"/>
    <property type="evidence" value="ECO:0007669"/>
    <property type="project" value="InterPro"/>
</dbReference>
<dbReference type="GO" id="GO:0046872">
    <property type="term" value="F:metal ion binding"/>
    <property type="evidence" value="ECO:0007669"/>
    <property type="project" value="UniProtKB-KW"/>
</dbReference>
<dbReference type="GO" id="GO:0015948">
    <property type="term" value="P:methanogenesis"/>
    <property type="evidence" value="ECO:0007669"/>
    <property type="project" value="UniProtKB-KW"/>
</dbReference>
<dbReference type="Gene3D" id="1.10.1060.10">
    <property type="entry name" value="Alpha-helical ferredoxin"/>
    <property type="match status" value="1"/>
</dbReference>
<dbReference type="InterPro" id="IPR017896">
    <property type="entry name" value="4Fe4S_Fe-S-bd"/>
</dbReference>
<dbReference type="InterPro" id="IPR017900">
    <property type="entry name" value="4Fe4S_Fe_S_CS"/>
</dbReference>
<dbReference type="InterPro" id="IPR017680">
    <property type="entry name" value="CoB/CoM_hetero-S_Rdtase_csu"/>
</dbReference>
<dbReference type="InterPro" id="IPR051460">
    <property type="entry name" value="HdrC_iron-sulfur_subunit"/>
</dbReference>
<dbReference type="InterPro" id="IPR009051">
    <property type="entry name" value="Helical_ferredxn"/>
</dbReference>
<dbReference type="NCBIfam" id="TIGR03290">
    <property type="entry name" value="CoB_CoM_SS_C"/>
    <property type="match status" value="1"/>
</dbReference>
<dbReference type="PANTHER" id="PTHR43255:SF1">
    <property type="entry name" value="IRON-SULFUR-BINDING OXIDOREDUCTASE FADF-RELATED"/>
    <property type="match status" value="1"/>
</dbReference>
<dbReference type="PANTHER" id="PTHR43255">
    <property type="entry name" value="IRON-SULFUR-BINDING OXIDOREDUCTASE FADF-RELATED-RELATED"/>
    <property type="match status" value="1"/>
</dbReference>
<dbReference type="Pfam" id="PF13183">
    <property type="entry name" value="Fer4_8"/>
    <property type="match status" value="1"/>
</dbReference>
<dbReference type="SUPFAM" id="SSF46548">
    <property type="entry name" value="alpha-helical ferredoxin"/>
    <property type="match status" value="1"/>
</dbReference>
<dbReference type="PROSITE" id="PS00198">
    <property type="entry name" value="4FE4S_FER_1"/>
    <property type="match status" value="2"/>
</dbReference>
<dbReference type="PROSITE" id="PS51379">
    <property type="entry name" value="4FE4S_FER_2"/>
    <property type="match status" value="2"/>
</dbReference>
<accession>Q6LYD7</accession>
<evidence type="ECO:0000255" key="1">
    <source>
        <dbReference type="PROSITE-ProRule" id="PRU00711"/>
    </source>
</evidence>
<evidence type="ECO:0000269" key="2">
    <source>
    </source>
</evidence>
<evidence type="ECO:0000269" key="3">
    <source>
    </source>
</evidence>
<evidence type="ECO:0000303" key="4">
    <source>
    </source>
</evidence>
<evidence type="ECO:0000305" key="5"/>
<evidence type="ECO:0000312" key="6">
    <source>
        <dbReference type="EMBL" id="CAF30610.1"/>
    </source>
</evidence>
<proteinExistence type="evidence at protein level"/>
<protein>
    <recommendedName>
        <fullName evidence="5">H(2)/formate:CoB-CoM heterodisulfide,ferredoxin reductase subunit C2</fullName>
        <ecNumber evidence="3">1.8.98.5</ecNumber>
        <ecNumber evidence="2 3">1.8.98.6</ecNumber>
    </recommendedName>
    <alternativeName>
        <fullName evidence="5">CoB--CoM heterodisulfide reductase iron-sulfur subunit C2</fullName>
    </alternativeName>
</protein>
<organism>
    <name type="scientific">Methanococcus maripaludis (strain DSM 14266 / JCM 13030 / NBRC 101832 / S2 / LL)</name>
    <dbReference type="NCBI Taxonomy" id="267377"/>
    <lineage>
        <taxon>Archaea</taxon>
        <taxon>Methanobacteriati</taxon>
        <taxon>Methanobacteriota</taxon>
        <taxon>Methanomada group</taxon>
        <taxon>Methanococci</taxon>
        <taxon>Methanococcales</taxon>
        <taxon>Methanococcaceae</taxon>
        <taxon>Methanococcus</taxon>
    </lineage>
</organism>